<organism>
    <name type="scientific">Datura stramonium</name>
    <name type="common">Jimsonweed</name>
    <name type="synonym">Common thornapple</name>
    <dbReference type="NCBI Taxonomy" id="4076"/>
    <lineage>
        <taxon>Eukaryota</taxon>
        <taxon>Viridiplantae</taxon>
        <taxon>Streptophyta</taxon>
        <taxon>Embryophyta</taxon>
        <taxon>Tracheophyta</taxon>
        <taxon>Spermatophyta</taxon>
        <taxon>Magnoliopsida</taxon>
        <taxon>eudicotyledons</taxon>
        <taxon>Gunneridae</taxon>
        <taxon>Pentapetalae</taxon>
        <taxon>asterids</taxon>
        <taxon>lamiids</taxon>
        <taxon>Solanales</taxon>
        <taxon>Solanaceae</taxon>
        <taxon>Solanoideae</taxon>
        <taxon>Datureae</taxon>
        <taxon>Datura</taxon>
    </lineage>
</organism>
<gene>
    <name evidence="1" type="primary">rbcL</name>
</gene>
<geneLocation type="chloroplast"/>
<accession>P48698</accession>
<feature type="chain" id="PRO_0000062438" description="Ribulose bisphosphate carboxylase large chain">
    <location>
        <begin position="1" status="less than"/>
        <end position="468"/>
    </location>
</feature>
<feature type="active site" description="Proton acceptor" evidence="1">
    <location>
        <position position="166"/>
    </location>
</feature>
<feature type="active site" description="Proton acceptor" evidence="1">
    <location>
        <position position="285"/>
    </location>
</feature>
<feature type="binding site" description="in homodimeric partner" evidence="1">
    <location>
        <position position="114"/>
    </location>
    <ligand>
        <name>substrate</name>
    </ligand>
</feature>
<feature type="binding site" evidence="1">
    <location>
        <position position="164"/>
    </location>
    <ligand>
        <name>substrate</name>
    </ligand>
</feature>
<feature type="binding site" evidence="1">
    <location>
        <position position="168"/>
    </location>
    <ligand>
        <name>substrate</name>
    </ligand>
</feature>
<feature type="binding site" description="via carbamate group" evidence="1">
    <location>
        <position position="192"/>
    </location>
    <ligand>
        <name>Mg(2+)</name>
        <dbReference type="ChEBI" id="CHEBI:18420"/>
    </ligand>
</feature>
<feature type="binding site" evidence="1">
    <location>
        <position position="194"/>
    </location>
    <ligand>
        <name>Mg(2+)</name>
        <dbReference type="ChEBI" id="CHEBI:18420"/>
    </ligand>
</feature>
<feature type="binding site" evidence="1">
    <location>
        <position position="195"/>
    </location>
    <ligand>
        <name>Mg(2+)</name>
        <dbReference type="ChEBI" id="CHEBI:18420"/>
    </ligand>
</feature>
<feature type="binding site" evidence="1">
    <location>
        <position position="286"/>
    </location>
    <ligand>
        <name>substrate</name>
    </ligand>
</feature>
<feature type="binding site" evidence="1">
    <location>
        <position position="318"/>
    </location>
    <ligand>
        <name>substrate</name>
    </ligand>
</feature>
<feature type="binding site" evidence="1">
    <location>
        <position position="370"/>
    </location>
    <ligand>
        <name>substrate</name>
    </ligand>
</feature>
<feature type="site" description="Transition state stabilizer" evidence="1">
    <location>
        <position position="325"/>
    </location>
</feature>
<feature type="modified residue" description="N6,N6,N6-trimethyllysine" evidence="1">
    <location>
        <position position="5"/>
    </location>
</feature>
<feature type="modified residue" description="N6-carboxylysine" evidence="1">
    <location>
        <position position="192"/>
    </location>
</feature>
<feature type="disulfide bond" description="Interchain; in linked form" evidence="1">
    <location>
        <position position="238"/>
    </location>
</feature>
<feature type="non-terminal residue">
    <location>
        <position position="1"/>
    </location>
</feature>
<evidence type="ECO:0000255" key="1">
    <source>
        <dbReference type="HAMAP-Rule" id="MF_01338"/>
    </source>
</evidence>
<keyword id="KW-0113">Calvin cycle</keyword>
<keyword id="KW-0120">Carbon dioxide fixation</keyword>
<keyword id="KW-0150">Chloroplast</keyword>
<keyword id="KW-1015">Disulfide bond</keyword>
<keyword id="KW-0456">Lyase</keyword>
<keyword id="KW-0460">Magnesium</keyword>
<keyword id="KW-0479">Metal-binding</keyword>
<keyword id="KW-0488">Methylation</keyword>
<keyword id="KW-0503">Monooxygenase</keyword>
<keyword id="KW-0560">Oxidoreductase</keyword>
<keyword id="KW-0601">Photorespiration</keyword>
<keyword id="KW-0602">Photosynthesis</keyword>
<keyword id="KW-0934">Plastid</keyword>
<sequence>SVGFKAGVKEYKLTYYTPEYQTKDTDILAAFRVTPQPGVPPEEAGAAVAAESSTGTWTTVWTDGLTSLDRYKGRCYRIERVVGEKDQYIAYVAYPLDLFEEGSVTNMFTSIVGNVFGFKALRALRLEDLRIPPAYVKTFQGPPHGIQVERDKLNKYGRPLLGCTIKPKLGLSAKNYGRAVYECLRGGLDFTKDDENVNSQPFMRWRDRFLFCAEALFKAQVETGEIKGHYLNATAGTCEEMIKRAVFARELGVPIVMHDYLTGGFTANTSLAHYCRDNGLLLHIHRAMHAVIDRQKNHGIHFRVLAKALRMSGGDHIHSGTVVGKLEGERDITLGFVDLLRDDFVEQDRSRGIYFTQDWVSLPGVLPVASGGIHVWHMPALTEIFGDDSVLQFGGGTLGHPWGNAPGAVANRVALEACVKARNEGRDLAREGNEIIREASKWSPELAAACEVWKEIVFNFAAVDVLDK</sequence>
<protein>
    <recommendedName>
        <fullName evidence="1">Ribulose bisphosphate carboxylase large chain</fullName>
        <shortName evidence="1">RuBisCO large subunit</shortName>
        <ecNumber evidence="1">4.1.1.39</ecNumber>
    </recommendedName>
</protein>
<proteinExistence type="inferred from homology"/>
<reference key="1">
    <citation type="journal article" date="1994" name="Syst. Biol.">
        <title>Combining data in phylogenetic systematics: an empirical approach using three molecular data sets in the Solanaceae.</title>
        <authorList>
            <person name="Olmstead R.G."/>
            <person name="Sweere J.A."/>
        </authorList>
    </citation>
    <scope>NUCLEOTIDE SEQUENCE [GENOMIC DNA]</scope>
</reference>
<name>RBL_DATST</name>
<dbReference type="EC" id="4.1.1.39" evidence="1"/>
<dbReference type="EMBL" id="U08611">
    <property type="protein sequence ID" value="AAA18386.1"/>
    <property type="molecule type" value="Genomic_DNA"/>
</dbReference>
<dbReference type="SMR" id="P48698"/>
<dbReference type="GO" id="GO:0009507">
    <property type="term" value="C:chloroplast"/>
    <property type="evidence" value="ECO:0007669"/>
    <property type="project" value="UniProtKB-SubCell"/>
</dbReference>
<dbReference type="GO" id="GO:0000287">
    <property type="term" value="F:magnesium ion binding"/>
    <property type="evidence" value="ECO:0007669"/>
    <property type="project" value="InterPro"/>
</dbReference>
<dbReference type="GO" id="GO:0004497">
    <property type="term" value="F:monooxygenase activity"/>
    <property type="evidence" value="ECO:0007669"/>
    <property type="project" value="UniProtKB-KW"/>
</dbReference>
<dbReference type="GO" id="GO:0016984">
    <property type="term" value="F:ribulose-bisphosphate carboxylase activity"/>
    <property type="evidence" value="ECO:0007669"/>
    <property type="project" value="UniProtKB-EC"/>
</dbReference>
<dbReference type="GO" id="GO:0009853">
    <property type="term" value="P:photorespiration"/>
    <property type="evidence" value="ECO:0007669"/>
    <property type="project" value="UniProtKB-KW"/>
</dbReference>
<dbReference type="GO" id="GO:0019253">
    <property type="term" value="P:reductive pentose-phosphate cycle"/>
    <property type="evidence" value="ECO:0007669"/>
    <property type="project" value="UniProtKB-KW"/>
</dbReference>
<dbReference type="CDD" id="cd08212">
    <property type="entry name" value="RuBisCO_large_I"/>
    <property type="match status" value="1"/>
</dbReference>
<dbReference type="FunFam" id="3.20.20.110:FF:000001">
    <property type="entry name" value="Ribulose bisphosphate carboxylase large chain"/>
    <property type="match status" value="1"/>
</dbReference>
<dbReference type="FunFam" id="3.30.70.150:FF:000001">
    <property type="entry name" value="Ribulose bisphosphate carboxylase large chain"/>
    <property type="match status" value="1"/>
</dbReference>
<dbReference type="Gene3D" id="3.20.20.110">
    <property type="entry name" value="Ribulose bisphosphate carboxylase, large subunit, C-terminal domain"/>
    <property type="match status" value="1"/>
</dbReference>
<dbReference type="Gene3D" id="3.30.70.150">
    <property type="entry name" value="RuBisCO large subunit, N-terminal domain"/>
    <property type="match status" value="1"/>
</dbReference>
<dbReference type="HAMAP" id="MF_01338">
    <property type="entry name" value="RuBisCO_L_type1"/>
    <property type="match status" value="1"/>
</dbReference>
<dbReference type="InterPro" id="IPR033966">
    <property type="entry name" value="RuBisCO"/>
</dbReference>
<dbReference type="InterPro" id="IPR020878">
    <property type="entry name" value="RuBisCo_large_chain_AS"/>
</dbReference>
<dbReference type="InterPro" id="IPR000685">
    <property type="entry name" value="RuBisCO_lsu_C"/>
</dbReference>
<dbReference type="InterPro" id="IPR036376">
    <property type="entry name" value="RuBisCO_lsu_C_sf"/>
</dbReference>
<dbReference type="InterPro" id="IPR017443">
    <property type="entry name" value="RuBisCO_lsu_fd_N"/>
</dbReference>
<dbReference type="InterPro" id="IPR036422">
    <property type="entry name" value="RuBisCO_lsu_N_sf"/>
</dbReference>
<dbReference type="InterPro" id="IPR020888">
    <property type="entry name" value="RuBisCO_lsuI"/>
</dbReference>
<dbReference type="NCBIfam" id="NF003252">
    <property type="entry name" value="PRK04208.1"/>
    <property type="match status" value="1"/>
</dbReference>
<dbReference type="PANTHER" id="PTHR42704">
    <property type="entry name" value="RIBULOSE BISPHOSPHATE CARBOXYLASE"/>
    <property type="match status" value="1"/>
</dbReference>
<dbReference type="PANTHER" id="PTHR42704:SF16">
    <property type="entry name" value="RIBULOSE BISPHOSPHATE CARBOXYLASE LARGE CHAIN"/>
    <property type="match status" value="1"/>
</dbReference>
<dbReference type="Pfam" id="PF00016">
    <property type="entry name" value="RuBisCO_large"/>
    <property type="match status" value="1"/>
</dbReference>
<dbReference type="Pfam" id="PF02788">
    <property type="entry name" value="RuBisCO_large_N"/>
    <property type="match status" value="1"/>
</dbReference>
<dbReference type="SFLD" id="SFLDG01052">
    <property type="entry name" value="RuBisCO"/>
    <property type="match status" value="1"/>
</dbReference>
<dbReference type="SFLD" id="SFLDS00014">
    <property type="entry name" value="RuBisCO"/>
    <property type="match status" value="1"/>
</dbReference>
<dbReference type="SFLD" id="SFLDG00301">
    <property type="entry name" value="RuBisCO-like_proteins"/>
    <property type="match status" value="1"/>
</dbReference>
<dbReference type="SUPFAM" id="SSF51649">
    <property type="entry name" value="RuBisCo, C-terminal domain"/>
    <property type="match status" value="1"/>
</dbReference>
<dbReference type="SUPFAM" id="SSF54966">
    <property type="entry name" value="RuBisCO, large subunit, small (N-terminal) domain"/>
    <property type="match status" value="1"/>
</dbReference>
<dbReference type="PROSITE" id="PS00157">
    <property type="entry name" value="RUBISCO_LARGE"/>
    <property type="match status" value="1"/>
</dbReference>
<comment type="function">
    <text evidence="1">RuBisCO catalyzes two reactions: the carboxylation of D-ribulose 1,5-bisphosphate, the primary event in carbon dioxide fixation, as well as the oxidative fragmentation of the pentose substrate in the photorespiration process. Both reactions occur simultaneously and in competition at the same active site.</text>
</comment>
<comment type="catalytic activity">
    <reaction evidence="1">
        <text>2 (2R)-3-phosphoglycerate + 2 H(+) = D-ribulose 1,5-bisphosphate + CO2 + H2O</text>
        <dbReference type="Rhea" id="RHEA:23124"/>
        <dbReference type="ChEBI" id="CHEBI:15377"/>
        <dbReference type="ChEBI" id="CHEBI:15378"/>
        <dbReference type="ChEBI" id="CHEBI:16526"/>
        <dbReference type="ChEBI" id="CHEBI:57870"/>
        <dbReference type="ChEBI" id="CHEBI:58272"/>
        <dbReference type="EC" id="4.1.1.39"/>
    </reaction>
</comment>
<comment type="catalytic activity">
    <reaction evidence="1">
        <text>D-ribulose 1,5-bisphosphate + O2 = 2-phosphoglycolate + (2R)-3-phosphoglycerate + 2 H(+)</text>
        <dbReference type="Rhea" id="RHEA:36631"/>
        <dbReference type="ChEBI" id="CHEBI:15378"/>
        <dbReference type="ChEBI" id="CHEBI:15379"/>
        <dbReference type="ChEBI" id="CHEBI:57870"/>
        <dbReference type="ChEBI" id="CHEBI:58033"/>
        <dbReference type="ChEBI" id="CHEBI:58272"/>
    </reaction>
</comment>
<comment type="cofactor">
    <cofactor evidence="1">
        <name>Mg(2+)</name>
        <dbReference type="ChEBI" id="CHEBI:18420"/>
    </cofactor>
    <text evidence="1">Binds 1 Mg(2+) ion per subunit.</text>
</comment>
<comment type="subunit">
    <text evidence="1">Heterohexadecamer of 8 large chains and 8 small chains; disulfide-linked. The disulfide link is formed within the large subunit homodimers.</text>
</comment>
<comment type="subcellular location">
    <subcellularLocation>
        <location>Plastid</location>
        <location>Chloroplast</location>
    </subcellularLocation>
</comment>
<comment type="PTM">
    <text evidence="1">The disulfide bond which can form in the large chain dimeric partners within the hexadecamer appears to be associated with oxidative stress and protein turnover.</text>
</comment>
<comment type="miscellaneous">
    <text evidence="1">The basic functional RuBisCO is composed of a large chain homodimer in a 'head-to-tail' conformation. In form I RuBisCO this homodimer is arranged in a barrel-like tetramer with the small subunits forming a tetrameric 'cap' on each end of the 'barrel'.</text>
</comment>
<comment type="similarity">
    <text evidence="1">Belongs to the RuBisCO large chain family. Type I subfamily.</text>
</comment>